<gene>
    <name type="primary">VHLL</name>
    <name type="synonym">VLP</name>
</gene>
<feature type="chain" id="PRO_0000265087" description="von Hippel-Lindau-like protein">
    <location>
        <begin position="1"/>
        <end position="139"/>
    </location>
</feature>
<feature type="region of interest" description="Disordered" evidence="1">
    <location>
        <begin position="1"/>
        <end position="22"/>
    </location>
</feature>
<feature type="region of interest" description="Beta-domain">
    <location>
        <begin position="54"/>
        <end position="135"/>
    </location>
</feature>
<feature type="mutagenesis site" description="Preferentially binds to a hydroxylated ODD peptide." evidence="2">
    <original>NFRS</original>
    <variation>SYRG</variation>
    <location>
        <begin position="93"/>
        <end position="96"/>
    </location>
</feature>
<name>VHLL_HUMAN</name>
<comment type="function">
    <text evidence="2">Functions as a dominant-negative VHL to serve as a protector of HIFalpha.</text>
</comment>
<comment type="subunit">
    <text evidence="2">Interacts via the beta domain with the ODD domain of HIF1A. This interaction is independent of prolyl hydroxylation of HIF1A.</text>
</comment>
<comment type="interaction">
    <interactant intactId="EBI-10254232">
        <id>Q6RSH7</id>
    </interactant>
    <interactant intactId="EBI-724310">
        <id>Q15038</id>
        <label>DAZAP2</label>
    </interactant>
    <organismsDiffer>false</organismsDiffer>
    <experiments>8</experiments>
</comment>
<comment type="interaction">
    <interactant intactId="EBI-10254232">
        <id>Q6RSH7</id>
    </interactant>
    <interactant intactId="EBI-740322">
        <id>Q93062</id>
        <label>RBPMS</label>
    </interactant>
    <organismsDiffer>false</organismsDiffer>
    <experiments>3</experiments>
</comment>
<comment type="interaction">
    <interactant intactId="EBI-10254232">
        <id>Q6RSH7</id>
    </interactant>
    <interactant intactId="EBI-740343">
        <id>Q93062-3</id>
        <label>RBPMS</label>
    </interactant>
    <organismsDiffer>false</organismsDiffer>
    <experiments>3</experiments>
</comment>
<comment type="interaction">
    <interactant intactId="EBI-10254232">
        <id>Q6RSH7</id>
    </interactant>
    <interactant intactId="EBI-2107455">
        <id>Q08AM6</id>
        <label>VAC14</label>
    </interactant>
    <organismsDiffer>false</organismsDiffer>
    <experiments>3</experiments>
</comment>
<comment type="interaction">
    <interactant intactId="EBI-10254232">
        <id>Q6RSH7</id>
    </interactant>
    <interactant intactId="EBI-10191303">
        <id>O95231</id>
        <label>VENTX</label>
    </interactant>
    <organismsDiffer>false</organismsDiffer>
    <experiments>3</experiments>
</comment>
<comment type="tissue specificity">
    <text evidence="2">Abundantly expressed in the placenta.</text>
</comment>
<comment type="miscellaneous">
    <text>Has little or no E3 ubiquitin ligase activity as it lacks the alpha domain required for nucleating the multiprotein E3 ubiquitin ligase complex.</text>
</comment>
<comment type="similarity">
    <text evidence="3">Belongs to the VHL family.</text>
</comment>
<accession>Q6RSH7</accession>
<accession>A1L4M4</accession>
<sequence>MPWRAGNGVGLEAQAGTQEAGPEEYCQEELGAEEEMAARAAWPVLRSVNSRELSRIIICNHSPRIVLPVWLNYYGKLLPYLTLLPGRDFRIHNFRSHPWLFRDARTHDKLLVNQTELFVPSSNVNGQPVFANITLQCIP</sequence>
<evidence type="ECO:0000256" key="1">
    <source>
        <dbReference type="SAM" id="MobiDB-lite"/>
    </source>
</evidence>
<evidence type="ECO:0000269" key="2">
    <source>
    </source>
</evidence>
<evidence type="ECO:0000305" key="3"/>
<reference key="1">
    <citation type="journal article" date="2004" name="Mol. Cancer Res.">
        <title>Molecular cloning and characterization of the von Hippel-Lindau-like protein.</title>
        <authorList>
            <person name="Qi H."/>
            <person name="Gervais M.L."/>
            <person name="Li W."/>
            <person name="DeCaprio J.A."/>
            <person name="Challis J.R.G."/>
            <person name="Ohh M."/>
        </authorList>
    </citation>
    <scope>NUCLEOTIDE SEQUENCE [MRNA]</scope>
    <scope>FUNCTION</scope>
    <scope>INTERACTION WITH HIF1A</scope>
    <scope>TISSUE SPECIFICITY</scope>
    <scope>MUTAGENESIS OF 93-ASN--SER-96</scope>
</reference>
<reference key="2">
    <citation type="journal article" date="2004" name="Genome Res.">
        <title>The status, quality, and expansion of the NIH full-length cDNA project: the Mammalian Gene Collection (MGC).</title>
        <authorList>
            <consortium name="The MGC Project Team"/>
        </authorList>
    </citation>
    <scope>NUCLEOTIDE SEQUENCE [LARGE SCALE MRNA]</scope>
    <source>
        <tissue>Brain</tissue>
    </source>
</reference>
<organism>
    <name type="scientific">Homo sapiens</name>
    <name type="common">Human</name>
    <dbReference type="NCBI Taxonomy" id="9606"/>
    <lineage>
        <taxon>Eukaryota</taxon>
        <taxon>Metazoa</taxon>
        <taxon>Chordata</taxon>
        <taxon>Craniata</taxon>
        <taxon>Vertebrata</taxon>
        <taxon>Euteleostomi</taxon>
        <taxon>Mammalia</taxon>
        <taxon>Eutheria</taxon>
        <taxon>Euarchontoglires</taxon>
        <taxon>Primates</taxon>
        <taxon>Haplorrhini</taxon>
        <taxon>Catarrhini</taxon>
        <taxon>Hominidae</taxon>
        <taxon>Homo</taxon>
    </lineage>
</organism>
<dbReference type="EMBL" id="AY494836">
    <property type="protein sequence ID" value="AAS48916.1"/>
    <property type="molecule type" value="mRNA"/>
</dbReference>
<dbReference type="EMBL" id="BC130596">
    <property type="protein sequence ID" value="AAI30597.1"/>
    <property type="molecule type" value="mRNA"/>
</dbReference>
<dbReference type="EMBL" id="BC130598">
    <property type="protein sequence ID" value="AAI30599.1"/>
    <property type="molecule type" value="mRNA"/>
</dbReference>
<dbReference type="RefSeq" id="NP_001004319.1">
    <property type="nucleotide sequence ID" value="NM_001004319.3"/>
</dbReference>
<dbReference type="SMR" id="Q6RSH7"/>
<dbReference type="BioGRID" id="133800">
    <property type="interactions" value="6"/>
</dbReference>
<dbReference type="IntAct" id="Q6RSH7">
    <property type="interactions" value="4"/>
</dbReference>
<dbReference type="STRING" id="9606.ENSP00000464258"/>
<dbReference type="iPTMnet" id="Q6RSH7"/>
<dbReference type="PhosphoSitePlus" id="Q6RSH7"/>
<dbReference type="BioMuta" id="VHLL"/>
<dbReference type="DMDM" id="74749322"/>
<dbReference type="PaxDb" id="9606-ENSP00000464258"/>
<dbReference type="ProteomicsDB" id="67325"/>
<dbReference type="Antibodypedia" id="68434">
    <property type="antibodies" value="52 antibodies from 12 providers"/>
</dbReference>
<dbReference type="DNASU" id="391104"/>
<dbReference type="Ensembl" id="ENST00000339922.5">
    <property type="protein sequence ID" value="ENSP00000464258.2"/>
    <property type="gene ID" value="ENSG00000189030.10"/>
</dbReference>
<dbReference type="GeneID" id="391104"/>
<dbReference type="KEGG" id="hsa:391104"/>
<dbReference type="MANE-Select" id="ENST00000339922.5">
    <property type="protein sequence ID" value="ENSP00000464258.2"/>
    <property type="RefSeq nucleotide sequence ID" value="NM_001004319.3"/>
    <property type="RefSeq protein sequence ID" value="NP_001004319.1"/>
</dbReference>
<dbReference type="UCSC" id="uc001fok.4">
    <property type="organism name" value="human"/>
</dbReference>
<dbReference type="AGR" id="HGNC:30666"/>
<dbReference type="CTD" id="391104"/>
<dbReference type="DisGeNET" id="391104"/>
<dbReference type="GeneCards" id="VHLL"/>
<dbReference type="HGNC" id="HGNC:30666">
    <property type="gene designation" value="VHLL"/>
</dbReference>
<dbReference type="HPA" id="ENSG00000189030">
    <property type="expression patterns" value="Not detected"/>
</dbReference>
<dbReference type="MIM" id="619650">
    <property type="type" value="gene"/>
</dbReference>
<dbReference type="neXtProt" id="NX_Q6RSH7"/>
<dbReference type="PharmGKB" id="PA134987272"/>
<dbReference type="VEuPathDB" id="HostDB:ENSG00000189030"/>
<dbReference type="eggNOG" id="KOG4710">
    <property type="taxonomic scope" value="Eukaryota"/>
</dbReference>
<dbReference type="GeneTree" id="ENSGT00390000014353"/>
<dbReference type="HOGENOM" id="CLU_1844478_0_0_1"/>
<dbReference type="InParanoid" id="Q6RSH7"/>
<dbReference type="OMA" id="AGPEEYC"/>
<dbReference type="OrthoDB" id="413400at2759"/>
<dbReference type="PAN-GO" id="Q6RSH7">
    <property type="GO annotations" value="0 GO annotations based on evolutionary models"/>
</dbReference>
<dbReference type="PhylomeDB" id="Q6RSH7"/>
<dbReference type="TreeFam" id="TF318985"/>
<dbReference type="PathwayCommons" id="Q6RSH7"/>
<dbReference type="SignaLink" id="Q6RSH7"/>
<dbReference type="BioGRID-ORCS" id="391104">
    <property type="hits" value="10 hits in 297 CRISPR screens"/>
</dbReference>
<dbReference type="GenomeRNAi" id="391104"/>
<dbReference type="Pharos" id="Q6RSH7">
    <property type="development level" value="Tdark"/>
</dbReference>
<dbReference type="PRO" id="PR:Q6RSH7"/>
<dbReference type="Proteomes" id="UP000005640">
    <property type="component" value="Chromosome 1"/>
</dbReference>
<dbReference type="RNAct" id="Q6RSH7">
    <property type="molecule type" value="protein"/>
</dbReference>
<dbReference type="Bgee" id="ENSG00000189030">
    <property type="expression patterns" value="Expressed in hindlimb stylopod muscle and 33 other cell types or tissues"/>
</dbReference>
<dbReference type="CDD" id="cd05468">
    <property type="entry name" value="pVHL"/>
    <property type="match status" value="1"/>
</dbReference>
<dbReference type="FunFam" id="2.60.40.780:FF:000001">
    <property type="entry name" value="von Hippel-Lindau disease tumor suppressor"/>
    <property type="match status" value="1"/>
</dbReference>
<dbReference type="Gene3D" id="2.60.40.780">
    <property type="entry name" value="von Hippel-Lindau disease tumour suppressor, beta domain"/>
    <property type="match status" value="1"/>
</dbReference>
<dbReference type="InterPro" id="IPR024053">
    <property type="entry name" value="VHL_beta_dom"/>
</dbReference>
<dbReference type="InterPro" id="IPR037140">
    <property type="entry name" value="VHL_beta_dom_sf"/>
</dbReference>
<dbReference type="InterPro" id="IPR036208">
    <property type="entry name" value="VHL_sf"/>
</dbReference>
<dbReference type="InterPro" id="IPR022772">
    <property type="entry name" value="VHL_tumour_suppress_b/a_dom"/>
</dbReference>
<dbReference type="Pfam" id="PF01847">
    <property type="entry name" value="VHL"/>
    <property type="match status" value="1"/>
</dbReference>
<dbReference type="SUPFAM" id="SSF49468">
    <property type="entry name" value="VHL"/>
    <property type="match status" value="1"/>
</dbReference>
<keyword id="KW-1185">Reference proteome</keyword>
<proteinExistence type="evidence at protein level"/>
<protein>
    <recommendedName>
        <fullName>von Hippel-Lindau-like protein</fullName>
        <shortName>VHL-like protein</shortName>
        <shortName>VLP</shortName>
    </recommendedName>
</protein>